<protein>
    <recommendedName>
        <fullName evidence="5">NAD-capped RNA hydrolase NUDT12</fullName>
        <shortName evidence="5">DeNADding enzyme NUDT12</shortName>
        <ecNumber evidence="2">3.6.1.-</ecNumber>
    </recommendedName>
    <alternativeName>
        <fullName evidence="5">NADH pyrophosphatase NUDT12</fullName>
        <ecNumber evidence="1">3.6.1.22</ecNumber>
    </alternativeName>
    <alternativeName>
        <fullName evidence="5">Nucleoside diphosphate-linked moiety X motif 12</fullName>
        <shortName evidence="5">Nudix motif 12</shortName>
    </alternativeName>
</protein>
<proteinExistence type="evidence at transcript level"/>
<feature type="chain" id="PRO_0000260766" description="NAD-capped RNA hydrolase NUDT12">
    <location>
        <begin position="1"/>
        <end position="462"/>
    </location>
</feature>
<feature type="repeat" description="ANK 1">
    <location>
        <begin position="11"/>
        <end position="40"/>
    </location>
</feature>
<feature type="repeat" description="ANK 2">
    <location>
        <begin position="45"/>
        <end position="74"/>
    </location>
</feature>
<feature type="repeat" description="ANK 3">
    <location>
        <begin position="78"/>
        <end position="98"/>
    </location>
</feature>
<feature type="domain" description="Nudix hydrolase" evidence="3">
    <location>
        <begin position="319"/>
        <end position="453"/>
    </location>
</feature>
<feature type="short sequence motif" description="Nudix box">
    <location>
        <begin position="355"/>
        <end position="376"/>
    </location>
</feature>
<feature type="short sequence motif" description="Microbody targeting signal" evidence="1">
    <location>
        <begin position="460"/>
        <end position="462"/>
    </location>
</feature>
<feature type="binding site" evidence="2">
    <location>
        <position position="284"/>
    </location>
    <ligand>
        <name>Zn(2+)</name>
        <dbReference type="ChEBI" id="CHEBI:29105"/>
    </ligand>
</feature>
<feature type="binding site" evidence="2">
    <location>
        <position position="287"/>
    </location>
    <ligand>
        <name>Zn(2+)</name>
        <dbReference type="ChEBI" id="CHEBI:29105"/>
    </ligand>
</feature>
<feature type="binding site" evidence="2">
    <location>
        <position position="302"/>
    </location>
    <ligand>
        <name>Zn(2+)</name>
        <dbReference type="ChEBI" id="CHEBI:29105"/>
    </ligand>
</feature>
<feature type="binding site" evidence="2">
    <location>
        <position position="307"/>
    </location>
    <ligand>
        <name>Zn(2+)</name>
        <dbReference type="ChEBI" id="CHEBI:29105"/>
    </ligand>
</feature>
<feature type="binding site" evidence="2">
    <location>
        <position position="318"/>
    </location>
    <ligand>
        <name>substrate</name>
    </ligand>
</feature>
<feature type="binding site" evidence="2">
    <location>
        <begin position="354"/>
        <end position="356"/>
    </location>
    <ligand>
        <name>substrate</name>
    </ligand>
</feature>
<feature type="binding site" evidence="2">
    <location>
        <position position="354"/>
    </location>
    <ligand>
        <name>Mg(2+)</name>
        <dbReference type="ChEBI" id="CHEBI:18420"/>
        <label>1</label>
    </ligand>
</feature>
<feature type="binding site" evidence="2">
    <location>
        <position position="370"/>
    </location>
    <ligand>
        <name>Mg(2+)</name>
        <dbReference type="ChEBI" id="CHEBI:18420"/>
        <label>2</label>
    </ligand>
</feature>
<feature type="binding site" evidence="2">
    <location>
        <position position="370"/>
    </location>
    <ligand>
        <name>Mg(2+)</name>
        <dbReference type="ChEBI" id="CHEBI:18420"/>
        <label>3</label>
    </ligand>
</feature>
<feature type="binding site" evidence="2">
    <location>
        <position position="370"/>
    </location>
    <ligand>
        <name>substrate</name>
    </ligand>
</feature>
<feature type="binding site" evidence="2">
    <location>
        <position position="374"/>
    </location>
    <ligand>
        <name>Mg(2+)</name>
        <dbReference type="ChEBI" id="CHEBI:18420"/>
        <label>1</label>
    </ligand>
</feature>
<feature type="binding site" evidence="2">
    <location>
        <position position="374"/>
    </location>
    <ligand>
        <name>Mg(2+)</name>
        <dbReference type="ChEBI" id="CHEBI:18420"/>
        <label>3</label>
    </ligand>
</feature>
<feature type="binding site" evidence="2">
    <location>
        <position position="374"/>
    </location>
    <ligand>
        <name>substrate</name>
    </ligand>
</feature>
<feature type="binding site" evidence="2">
    <location>
        <position position="415"/>
    </location>
    <ligand>
        <name>Mg(2+)</name>
        <dbReference type="ChEBI" id="CHEBI:18420"/>
        <label>1</label>
    </ligand>
</feature>
<feature type="binding site" evidence="2">
    <location>
        <position position="415"/>
    </location>
    <ligand>
        <name>Mg(2+)</name>
        <dbReference type="ChEBI" id="CHEBI:18420"/>
        <label>3</label>
    </ligand>
</feature>
<feature type="binding site" evidence="2">
    <location>
        <position position="415"/>
    </location>
    <ligand>
        <name>substrate</name>
    </ligand>
</feature>
<feature type="modified residue" description="N6-succinyllysine" evidence="2">
    <location>
        <position position="185"/>
    </location>
</feature>
<feature type="modified residue" description="N6-succinyllysine" evidence="2">
    <location>
        <position position="292"/>
    </location>
</feature>
<keyword id="KW-0040">ANK repeat</keyword>
<keyword id="KW-0963">Cytoplasm</keyword>
<keyword id="KW-0378">Hydrolase</keyword>
<keyword id="KW-0460">Magnesium</keyword>
<keyword id="KW-0479">Metal-binding</keyword>
<keyword id="KW-0520">NAD</keyword>
<keyword id="KW-0521">NADP</keyword>
<keyword id="KW-0576">Peroxisome</keyword>
<keyword id="KW-1185">Reference proteome</keyword>
<keyword id="KW-0677">Repeat</keyword>
<keyword id="KW-0862">Zinc</keyword>
<dbReference type="EC" id="3.6.1.-" evidence="2"/>
<dbReference type="EC" id="3.6.1.22" evidence="1"/>
<dbReference type="EMBL" id="AB168797">
    <property type="protein sequence ID" value="BAE00904.1"/>
    <property type="molecule type" value="mRNA"/>
</dbReference>
<dbReference type="RefSeq" id="NP_001272283.1">
    <property type="nucleotide sequence ID" value="NM_001285354.1"/>
</dbReference>
<dbReference type="SMR" id="Q4R7L8"/>
<dbReference type="STRING" id="9541.ENSMFAP00000036197"/>
<dbReference type="eggNOG" id="KOG0504">
    <property type="taxonomic scope" value="Eukaryota"/>
</dbReference>
<dbReference type="eggNOG" id="KOG3084">
    <property type="taxonomic scope" value="Eukaryota"/>
</dbReference>
<dbReference type="Proteomes" id="UP000233100">
    <property type="component" value="Unplaced"/>
</dbReference>
<dbReference type="GO" id="GO:0005829">
    <property type="term" value="C:cytosol"/>
    <property type="evidence" value="ECO:0007669"/>
    <property type="project" value="TreeGrafter"/>
</dbReference>
<dbReference type="GO" id="GO:0005777">
    <property type="term" value="C:peroxisome"/>
    <property type="evidence" value="ECO:0007669"/>
    <property type="project" value="UniProtKB-SubCell"/>
</dbReference>
<dbReference type="GO" id="GO:0000287">
    <property type="term" value="F:magnesium ion binding"/>
    <property type="evidence" value="ECO:0000250"/>
    <property type="project" value="UniProtKB"/>
</dbReference>
<dbReference type="GO" id="GO:0000210">
    <property type="term" value="F:NAD+ diphosphatase activity"/>
    <property type="evidence" value="ECO:0007669"/>
    <property type="project" value="RHEA"/>
</dbReference>
<dbReference type="GO" id="GO:0035529">
    <property type="term" value="F:NADH pyrophosphatase activity"/>
    <property type="evidence" value="ECO:0007669"/>
    <property type="project" value="TreeGrafter"/>
</dbReference>
<dbReference type="GO" id="GO:0010943">
    <property type="term" value="F:NADPH pyrophosphatase activity"/>
    <property type="evidence" value="ECO:0007669"/>
    <property type="project" value="RHEA"/>
</dbReference>
<dbReference type="GO" id="GO:0110153">
    <property type="term" value="F:RNA NAD-cap (NMN-forming) hydrolase activity"/>
    <property type="evidence" value="ECO:0000250"/>
    <property type="project" value="UniProtKB"/>
</dbReference>
<dbReference type="GO" id="GO:0008270">
    <property type="term" value="F:zinc ion binding"/>
    <property type="evidence" value="ECO:0000250"/>
    <property type="project" value="UniProtKB"/>
</dbReference>
<dbReference type="GO" id="GO:0032922">
    <property type="term" value="P:circadian regulation of gene expression"/>
    <property type="evidence" value="ECO:0000250"/>
    <property type="project" value="UniProtKB"/>
</dbReference>
<dbReference type="GO" id="GO:0006402">
    <property type="term" value="P:mRNA catabolic process"/>
    <property type="evidence" value="ECO:0000250"/>
    <property type="project" value="UniProtKB"/>
</dbReference>
<dbReference type="GO" id="GO:0019677">
    <property type="term" value="P:NAD catabolic process"/>
    <property type="evidence" value="ECO:0007669"/>
    <property type="project" value="TreeGrafter"/>
</dbReference>
<dbReference type="GO" id="GO:0110155">
    <property type="term" value="P:NAD-cap decapping"/>
    <property type="evidence" value="ECO:0000250"/>
    <property type="project" value="UniProtKB"/>
</dbReference>
<dbReference type="GO" id="GO:0006734">
    <property type="term" value="P:NADH metabolic process"/>
    <property type="evidence" value="ECO:0007669"/>
    <property type="project" value="TreeGrafter"/>
</dbReference>
<dbReference type="GO" id="GO:0006742">
    <property type="term" value="P:NADP catabolic process"/>
    <property type="evidence" value="ECO:0007669"/>
    <property type="project" value="TreeGrafter"/>
</dbReference>
<dbReference type="CDD" id="cd03429">
    <property type="entry name" value="NUDIX_NADH_pyrophosphatase_Nudt13"/>
    <property type="match status" value="1"/>
</dbReference>
<dbReference type="FunFam" id="1.25.40.20:FF:001067">
    <property type="entry name" value="Nudix (Nucleoside diphosphate linked moiety X)-type motif 12 (Predicted)"/>
    <property type="match status" value="1"/>
</dbReference>
<dbReference type="FunFam" id="3.90.79.10:FF:000023">
    <property type="entry name" value="Peroxisomal NADH pyrophosphatase NUDT12"/>
    <property type="match status" value="1"/>
</dbReference>
<dbReference type="FunFam" id="3.90.79.20:FF:000002">
    <property type="entry name" value="Peroxisomal NADH pyrophosphatase NUDT12"/>
    <property type="match status" value="1"/>
</dbReference>
<dbReference type="Gene3D" id="3.90.79.20">
    <property type="match status" value="1"/>
</dbReference>
<dbReference type="Gene3D" id="1.25.40.20">
    <property type="entry name" value="Ankyrin repeat-containing domain"/>
    <property type="match status" value="1"/>
</dbReference>
<dbReference type="Gene3D" id="3.90.79.10">
    <property type="entry name" value="Nucleoside Triphosphate Pyrophosphohydrolase"/>
    <property type="match status" value="1"/>
</dbReference>
<dbReference type="InterPro" id="IPR002110">
    <property type="entry name" value="Ankyrin_rpt"/>
</dbReference>
<dbReference type="InterPro" id="IPR036770">
    <property type="entry name" value="Ankyrin_rpt-contain_sf"/>
</dbReference>
<dbReference type="InterPro" id="IPR050241">
    <property type="entry name" value="NAD-cap_RNA_hydrolase_NudC"/>
</dbReference>
<dbReference type="InterPro" id="IPR015375">
    <property type="entry name" value="NADH_PPase-like_N"/>
</dbReference>
<dbReference type="InterPro" id="IPR049734">
    <property type="entry name" value="NudC-like_C"/>
</dbReference>
<dbReference type="InterPro" id="IPR015797">
    <property type="entry name" value="NUDIX_hydrolase-like_dom_sf"/>
</dbReference>
<dbReference type="InterPro" id="IPR020084">
    <property type="entry name" value="NUDIX_hydrolase_CS"/>
</dbReference>
<dbReference type="InterPro" id="IPR000086">
    <property type="entry name" value="NUDIX_hydrolase_dom"/>
</dbReference>
<dbReference type="InterPro" id="IPR015376">
    <property type="entry name" value="Znr_NADH_PPase"/>
</dbReference>
<dbReference type="NCBIfam" id="NF001299">
    <property type="entry name" value="PRK00241.1"/>
    <property type="match status" value="1"/>
</dbReference>
<dbReference type="PANTHER" id="PTHR42904:SF6">
    <property type="entry name" value="NAD-CAPPED RNA HYDROLASE NUDT12"/>
    <property type="match status" value="1"/>
</dbReference>
<dbReference type="PANTHER" id="PTHR42904">
    <property type="entry name" value="NUDIX HYDROLASE, NUDC SUBFAMILY"/>
    <property type="match status" value="1"/>
</dbReference>
<dbReference type="Pfam" id="PF12796">
    <property type="entry name" value="Ank_2"/>
    <property type="match status" value="1"/>
</dbReference>
<dbReference type="Pfam" id="PF00293">
    <property type="entry name" value="NUDIX"/>
    <property type="match status" value="1"/>
</dbReference>
<dbReference type="Pfam" id="PF09296">
    <property type="entry name" value="NUDIX-like"/>
    <property type="match status" value="1"/>
</dbReference>
<dbReference type="Pfam" id="PF09297">
    <property type="entry name" value="Zn_ribbon_NUD"/>
    <property type="match status" value="1"/>
</dbReference>
<dbReference type="SMART" id="SM00248">
    <property type="entry name" value="ANK"/>
    <property type="match status" value="3"/>
</dbReference>
<dbReference type="SUPFAM" id="SSF48403">
    <property type="entry name" value="Ankyrin repeat"/>
    <property type="match status" value="1"/>
</dbReference>
<dbReference type="SUPFAM" id="SSF55811">
    <property type="entry name" value="Nudix"/>
    <property type="match status" value="1"/>
</dbReference>
<dbReference type="PROSITE" id="PS50297">
    <property type="entry name" value="ANK_REP_REGION"/>
    <property type="match status" value="1"/>
</dbReference>
<dbReference type="PROSITE" id="PS50088">
    <property type="entry name" value="ANK_REPEAT"/>
    <property type="match status" value="1"/>
</dbReference>
<dbReference type="PROSITE" id="PS51462">
    <property type="entry name" value="NUDIX"/>
    <property type="match status" value="1"/>
</dbReference>
<dbReference type="PROSITE" id="PS00893">
    <property type="entry name" value="NUDIX_BOX"/>
    <property type="match status" value="1"/>
</dbReference>
<evidence type="ECO:0000250" key="1">
    <source>
        <dbReference type="UniProtKB" id="Q9BQG2"/>
    </source>
</evidence>
<evidence type="ECO:0000250" key="2">
    <source>
        <dbReference type="UniProtKB" id="Q9DCN1"/>
    </source>
</evidence>
<evidence type="ECO:0000255" key="3">
    <source>
        <dbReference type="PROSITE-ProRule" id="PRU00794"/>
    </source>
</evidence>
<evidence type="ECO:0000303" key="4">
    <source ref="1"/>
</evidence>
<evidence type="ECO:0000305" key="5"/>
<gene>
    <name evidence="1" type="primary">NUDT12</name>
    <name evidence="4" type="ORF">QtsA-14876</name>
</gene>
<sequence length="462" mass="52092">MSSVKRSPKQEIVTQFHCSAAEGDIAKLTGILSHSPSLLNETSENGWTALMYAARNGHPEIVQFLLEKGCDRSIVNKSRQTALDIAVFWGYKHIANLLATAKGGKKPWFLTNEVEECENYFSKTLLDRKSEKRNNADWLLAKESHPATVFILFSDLNPLVTLGGNKESFQQPEVRLCQLNYKDIKDYLAQPEEITLIFLGVELEMKDKLLNYAGEVPREEEDGLVAWFALGIDPIAAEEFKQRHENCYFLHPPMPALLQLKEKEAGVVAQARSVLAWHSRYKFCPTCGNGTKIEEGGYKRVCLKEDCPSLNGVHNTSYPRVDPVVIMQVIHPDGTRCLLGRQKRFPPGMFTCLAGFIEPGETIEDAVRREVEEESGVKVGHVQYVSCQPWPMPSSLMIGCLAVAVSTEIKVDKNEIEDARWFTREQVLDVLTKGKQQAFFVPPSRAIAHQLIKHWIRINPNL</sequence>
<reference key="1">
    <citation type="submission" date="2005-06" db="EMBL/GenBank/DDBJ databases">
        <title>DNA sequences of macaque genes expressed in brain or testis and its evolutionary implications.</title>
        <authorList>
            <consortium name="International consortium for macaque cDNA sequencing and analysis"/>
        </authorList>
    </citation>
    <scope>NUCLEOTIDE SEQUENCE [LARGE SCALE MRNA]</scope>
    <source>
        <tissue>Testis</tissue>
    </source>
</reference>
<name>NUD12_MACFA</name>
<accession>Q4R7L8</accession>
<organism>
    <name type="scientific">Macaca fascicularis</name>
    <name type="common">Crab-eating macaque</name>
    <name type="synonym">Cynomolgus monkey</name>
    <dbReference type="NCBI Taxonomy" id="9541"/>
    <lineage>
        <taxon>Eukaryota</taxon>
        <taxon>Metazoa</taxon>
        <taxon>Chordata</taxon>
        <taxon>Craniata</taxon>
        <taxon>Vertebrata</taxon>
        <taxon>Euteleostomi</taxon>
        <taxon>Mammalia</taxon>
        <taxon>Eutheria</taxon>
        <taxon>Euarchontoglires</taxon>
        <taxon>Primates</taxon>
        <taxon>Haplorrhini</taxon>
        <taxon>Catarrhini</taxon>
        <taxon>Cercopithecidae</taxon>
        <taxon>Cercopithecinae</taxon>
        <taxon>Macaca</taxon>
    </lineage>
</organism>
<comment type="function">
    <text evidence="1 2">mRNA decapping enzyme that specifically removes the nicotinamide adenine dinucleotide (NAD) cap from a subset of mRNAs by hydrolyzing the diphosphate linkage to produce nicotinamide mononucleotide (NMN) and 5' monophosphate mRNA. The NAD-cap is present at the 5'-end of some RNAs; in contrast to the canonical N7 methylguanosine (m7G) cap, the NAD cap promotes mRNA decay. Preferentially acts on NAD-capped transcripts in response to nutrient stress (By similarity). Also acts on free nicotinamide adenine dinucleotide molecules: hydrolyzes NAD(H) into NMN(H) and AMP, and NADPH into NMNH and 2',5'-ADP. May act to regulate the concentration of peroxisomal nicotinamide nucleotide cofactors required for oxidative metabolism in this organelle (By similarity). Regulates the levels of circadian clock components PER1, PER2, PER3 and CRY2 in the liver (By similarity).</text>
</comment>
<comment type="catalytic activity">
    <reaction evidence="2">
        <text>a 5'-end NAD(+)-phospho-ribonucleoside in mRNA + H2O = a 5'-end phospho-adenosine-phospho-ribonucleoside in mRNA + beta-nicotinamide D-ribonucleotide + 2 H(+)</text>
        <dbReference type="Rhea" id="RHEA:60876"/>
        <dbReference type="Rhea" id="RHEA-COMP:15698"/>
        <dbReference type="Rhea" id="RHEA-COMP:15719"/>
        <dbReference type="ChEBI" id="CHEBI:14649"/>
        <dbReference type="ChEBI" id="CHEBI:15377"/>
        <dbReference type="ChEBI" id="CHEBI:15378"/>
        <dbReference type="ChEBI" id="CHEBI:144029"/>
        <dbReference type="ChEBI" id="CHEBI:144051"/>
    </reaction>
    <physiologicalReaction direction="left-to-right" evidence="2">
        <dbReference type="Rhea" id="RHEA:60877"/>
    </physiologicalReaction>
</comment>
<comment type="catalytic activity">
    <reaction evidence="1">
        <text>NAD(+) + H2O = beta-nicotinamide D-ribonucleotide + AMP + 2 H(+)</text>
        <dbReference type="Rhea" id="RHEA:11800"/>
        <dbReference type="ChEBI" id="CHEBI:14649"/>
        <dbReference type="ChEBI" id="CHEBI:15377"/>
        <dbReference type="ChEBI" id="CHEBI:15378"/>
        <dbReference type="ChEBI" id="CHEBI:57540"/>
        <dbReference type="ChEBI" id="CHEBI:456215"/>
        <dbReference type="EC" id="3.6.1.22"/>
    </reaction>
    <physiologicalReaction direction="left-to-right" evidence="1">
        <dbReference type="Rhea" id="RHEA:11801"/>
    </physiologicalReaction>
</comment>
<comment type="catalytic activity">
    <reaction evidence="1">
        <text>NADH + H2O = reduced beta-nicotinamide D-ribonucleotide + AMP + 2 H(+)</text>
        <dbReference type="Rhea" id="RHEA:48868"/>
        <dbReference type="ChEBI" id="CHEBI:15377"/>
        <dbReference type="ChEBI" id="CHEBI:15378"/>
        <dbReference type="ChEBI" id="CHEBI:57945"/>
        <dbReference type="ChEBI" id="CHEBI:90832"/>
        <dbReference type="ChEBI" id="CHEBI:456215"/>
        <dbReference type="EC" id="3.6.1.22"/>
    </reaction>
    <physiologicalReaction direction="left-to-right" evidence="1">
        <dbReference type="Rhea" id="RHEA:48869"/>
    </physiologicalReaction>
</comment>
<comment type="catalytic activity">
    <reaction evidence="1">
        <text>NADPH + H2O = reduced beta-nicotinamide D-ribonucleotide + adenosine 2',5'-bisphosphate + 2 H(+)</text>
        <dbReference type="Rhea" id="RHEA:60820"/>
        <dbReference type="ChEBI" id="CHEBI:15377"/>
        <dbReference type="ChEBI" id="CHEBI:15378"/>
        <dbReference type="ChEBI" id="CHEBI:57783"/>
        <dbReference type="ChEBI" id="CHEBI:90832"/>
        <dbReference type="ChEBI" id="CHEBI:194156"/>
    </reaction>
    <physiologicalReaction direction="left-to-right" evidence="1">
        <dbReference type="Rhea" id="RHEA:60821"/>
    </physiologicalReaction>
</comment>
<comment type="cofactor">
    <cofactor evidence="2">
        <name>Mg(2+)</name>
        <dbReference type="ChEBI" id="CHEBI:18420"/>
    </cofactor>
    <text evidence="2">Binds 3 Mg(2+) ions per subunit.</text>
</comment>
<comment type="cofactor">
    <cofactor evidence="2">
        <name>Zn(2+)</name>
        <dbReference type="ChEBI" id="CHEBI:29105"/>
    </cofactor>
    <text evidence="2">Binds 1 zinc ion per subunit.</text>
</comment>
<comment type="subunit">
    <text evidence="1 2">Homodimer (By similarity). Homodimerization is essential for its catalytic activity and protein stability (By similarity). Interacts (via ANK repeats) with BLMH (By similarity).</text>
</comment>
<comment type="subcellular location">
    <subcellularLocation>
        <location evidence="1">Cytoplasm</location>
    </subcellularLocation>
    <subcellularLocation>
        <location evidence="1">Peroxisome</location>
    </subcellularLocation>
    <subcellularLocation>
        <location evidence="1">Cytoplasmic granule</location>
    </subcellularLocation>
    <text evidence="1">Localizes to cytoplasmic granules in the presence of BLMH.</text>
</comment>
<comment type="similarity">
    <text evidence="5">Belongs to the Nudix hydrolase family. NudC subfamily.</text>
</comment>